<organism>
    <name type="scientific">Halobacterium salinarum (strain ATCC 29341 / DSM 671 / R1)</name>
    <dbReference type="NCBI Taxonomy" id="478009"/>
    <lineage>
        <taxon>Archaea</taxon>
        <taxon>Methanobacteriati</taxon>
        <taxon>Methanobacteriota</taxon>
        <taxon>Stenosarchaea group</taxon>
        <taxon>Halobacteria</taxon>
        <taxon>Halobacteriales</taxon>
        <taxon>Halobacteriaceae</taxon>
        <taxon>Halobacterium</taxon>
        <taxon>Halobacterium salinarum NRC-34001</taxon>
    </lineage>
</organism>
<proteinExistence type="inferred from homology"/>
<reference key="1">
    <citation type="journal article" date="2008" name="Genomics">
        <title>Evolution in the laboratory: the genome of Halobacterium salinarum strain R1 compared to that of strain NRC-1.</title>
        <authorList>
            <person name="Pfeiffer F."/>
            <person name="Schuster S.C."/>
            <person name="Broicher A."/>
            <person name="Falb M."/>
            <person name="Palm P."/>
            <person name="Rodewald K."/>
            <person name="Ruepp A."/>
            <person name="Soppa J."/>
            <person name="Tittor J."/>
            <person name="Oesterhelt D."/>
        </authorList>
    </citation>
    <scope>NUCLEOTIDE SEQUENCE [LARGE SCALE GENOMIC DNA]</scope>
    <source>
        <strain>ATCC 29341 / DSM 671 / R1</strain>
    </source>
</reference>
<feature type="chain" id="PRO_0000345209" description="D-aminoacyl-tRNA deacylase">
    <location>
        <begin position="1"/>
        <end position="453"/>
    </location>
</feature>
<feature type="region of interest" description="Disordered" evidence="2">
    <location>
        <begin position="428"/>
        <end position="453"/>
    </location>
</feature>
<accession>B0R384</accession>
<dbReference type="EC" id="3.1.1.96" evidence="1"/>
<dbReference type="EMBL" id="AM774415">
    <property type="protein sequence ID" value="CAP13196.2"/>
    <property type="molecule type" value="Genomic_DNA"/>
</dbReference>
<dbReference type="RefSeq" id="WP_049892484.1">
    <property type="nucleotide sequence ID" value="NC_010364.1"/>
</dbReference>
<dbReference type="SMR" id="B0R384"/>
<dbReference type="EnsemblBacteria" id="CAP13196">
    <property type="protein sequence ID" value="CAP13196"/>
    <property type="gene ID" value="OE_1560R"/>
</dbReference>
<dbReference type="KEGG" id="hsl:OE_1560R"/>
<dbReference type="HOGENOM" id="CLU_610619_0_0_2"/>
<dbReference type="Proteomes" id="UP000001321">
    <property type="component" value="Chromosome"/>
</dbReference>
<dbReference type="GO" id="GO:0051499">
    <property type="term" value="F:D-aminoacyl-tRNA deacylase activity"/>
    <property type="evidence" value="ECO:0007669"/>
    <property type="project" value="UniProtKB-UniRule"/>
</dbReference>
<dbReference type="GO" id="GO:0008270">
    <property type="term" value="F:zinc ion binding"/>
    <property type="evidence" value="ECO:0007669"/>
    <property type="project" value="UniProtKB-UniRule"/>
</dbReference>
<dbReference type="GO" id="GO:0019478">
    <property type="term" value="P:D-amino acid catabolic process"/>
    <property type="evidence" value="ECO:0007669"/>
    <property type="project" value="UniProtKB-UniRule"/>
</dbReference>
<dbReference type="Gene3D" id="3.40.50.10700">
    <property type="entry name" value="AF0625-like"/>
    <property type="match status" value="1"/>
</dbReference>
<dbReference type="Gene3D" id="3.40.630.50">
    <property type="entry name" value="AF0625-like"/>
    <property type="match status" value="1"/>
</dbReference>
<dbReference type="HAMAP" id="MF_00562">
    <property type="entry name" value="Deacylase_DtdA"/>
    <property type="match status" value="1"/>
</dbReference>
<dbReference type="InterPro" id="IPR018033">
    <property type="entry name" value="Deacylase_DtdA_archaea"/>
</dbReference>
<dbReference type="InterPro" id="IPR007508">
    <property type="entry name" value="DtdA"/>
</dbReference>
<dbReference type="PANTHER" id="PTHR34667">
    <property type="entry name" value="D-AMINOACYL-TRNA DEACYLASE"/>
    <property type="match status" value="1"/>
</dbReference>
<dbReference type="PANTHER" id="PTHR34667:SF1">
    <property type="entry name" value="D-AMINOACYL-TRNA DEACYLASE"/>
    <property type="match status" value="1"/>
</dbReference>
<dbReference type="Pfam" id="PF04414">
    <property type="entry name" value="tRNA_deacylase"/>
    <property type="match status" value="1"/>
</dbReference>
<dbReference type="SUPFAM" id="SSF142535">
    <property type="entry name" value="AF0625-like"/>
    <property type="match status" value="1"/>
</dbReference>
<protein>
    <recommendedName>
        <fullName evidence="1">D-aminoacyl-tRNA deacylase</fullName>
        <ecNumber evidence="1">3.1.1.96</ecNumber>
    </recommendedName>
    <alternativeName>
        <fullName>D-tyrosyl-tRNA(Tyr) deacylase</fullName>
    </alternativeName>
</protein>
<name>DTDA_HALS3</name>
<gene>
    <name evidence="1" type="primary">dtdA</name>
    <name type="ordered locus">OE_1560R</name>
</gene>
<comment type="function">
    <text evidence="1">D-aminoacyl-tRNA deacylase with broad substrate specificity. By recycling D-aminoacyl-tRNA to D-amino acids and free tRNA molecules, this enzyme counteracts the toxicity associated with the formation of D-aminoacyl-tRNA entities in vivo.</text>
</comment>
<comment type="catalytic activity">
    <reaction evidence="1">
        <text>a D-aminoacyl-tRNA + H2O = a tRNA + a D-alpha-amino acid + H(+)</text>
        <dbReference type="Rhea" id="RHEA:13953"/>
        <dbReference type="Rhea" id="RHEA-COMP:10123"/>
        <dbReference type="Rhea" id="RHEA-COMP:10124"/>
        <dbReference type="ChEBI" id="CHEBI:15377"/>
        <dbReference type="ChEBI" id="CHEBI:15378"/>
        <dbReference type="ChEBI" id="CHEBI:59871"/>
        <dbReference type="ChEBI" id="CHEBI:78442"/>
        <dbReference type="ChEBI" id="CHEBI:79333"/>
        <dbReference type="EC" id="3.1.1.96"/>
    </reaction>
</comment>
<comment type="catalytic activity">
    <reaction evidence="1">
        <text>glycyl-tRNA(Ala) + H2O = tRNA(Ala) + glycine + H(+)</text>
        <dbReference type="Rhea" id="RHEA:53744"/>
        <dbReference type="Rhea" id="RHEA-COMP:9657"/>
        <dbReference type="Rhea" id="RHEA-COMP:13640"/>
        <dbReference type="ChEBI" id="CHEBI:15377"/>
        <dbReference type="ChEBI" id="CHEBI:15378"/>
        <dbReference type="ChEBI" id="CHEBI:57305"/>
        <dbReference type="ChEBI" id="CHEBI:78442"/>
        <dbReference type="ChEBI" id="CHEBI:78522"/>
        <dbReference type="EC" id="3.1.1.96"/>
    </reaction>
</comment>
<comment type="cofactor">
    <cofactor evidence="1">
        <name>Zn(2+)</name>
        <dbReference type="ChEBI" id="CHEBI:29105"/>
    </cofactor>
    <text evidence="1">Binds 2 Zn(2+) ions per subunit.</text>
</comment>
<comment type="subunit">
    <text evidence="1">Monomer.</text>
</comment>
<comment type="similarity">
    <text evidence="1">Belongs to the DtdA deacylase family.</text>
</comment>
<sequence>MIGIVVSRADGASTHIWAQLREIEDFERIGPDAYRADGIEVRVFEELHTTIDDAADAFEAAVDMVVVVSRHSGDTGPLLSAHYTGNFGAAEYGGADRSVAPACPNAHHAVVDSLRSYAPPEYDVAMECTHHGPTSVGAPSMFVELGSSPAEWQDDAGARAVARAVRDLRGVPPHGDRAVVVFGGGHYTPRATRILADTDWPVGHVAADWSLTELGRPNAHRGVVDAMFTASGAAHALVEGDRPELTETIRDLGYTVVSETWVRETDGVPLSRVAALEESLTTVDDGLRFGEPAATHTGGYLVVELPDAVLDAAHAVDTAATVAAGRSHALAVTTVNAGRRLAGSAAFPDADAYEAFVDDVAAVLNAEYASVSRADGELTATREVFDPEAAAALGVPEGPAFGRLAGGEAIEHDGRTIAPAAVTSTETVRADVALHERPRERVRRPSDDEGKGN</sequence>
<evidence type="ECO:0000255" key="1">
    <source>
        <dbReference type="HAMAP-Rule" id="MF_00562"/>
    </source>
</evidence>
<evidence type="ECO:0000256" key="2">
    <source>
        <dbReference type="SAM" id="MobiDB-lite"/>
    </source>
</evidence>
<keyword id="KW-0378">Hydrolase</keyword>
<keyword id="KW-0479">Metal-binding</keyword>
<keyword id="KW-0862">Zinc</keyword>